<keyword id="KW-0963">Cytoplasm</keyword>
<keyword id="KW-0238">DNA-binding</keyword>
<keyword id="KW-0520">NAD</keyword>
<keyword id="KW-0678">Repressor</keyword>
<keyword id="KW-0804">Transcription</keyword>
<keyword id="KW-0805">Transcription regulation</keyword>
<comment type="function">
    <text evidence="1">Modulates transcription in response to changes in cellular NADH/NAD(+) redox state.</text>
</comment>
<comment type="subunit">
    <text evidence="1">Homodimer.</text>
</comment>
<comment type="subcellular location">
    <subcellularLocation>
        <location evidence="1">Cytoplasm</location>
    </subcellularLocation>
</comment>
<comment type="similarity">
    <text evidence="1">Belongs to the transcriptional regulatory Rex family.</text>
</comment>
<organism>
    <name type="scientific">Thermoanaerobacter sp. (strain X514)</name>
    <dbReference type="NCBI Taxonomy" id="399726"/>
    <lineage>
        <taxon>Bacteria</taxon>
        <taxon>Bacillati</taxon>
        <taxon>Bacillota</taxon>
        <taxon>Clostridia</taxon>
        <taxon>Thermoanaerobacterales</taxon>
        <taxon>Thermoanaerobacteraceae</taxon>
        <taxon>Thermoanaerobacter</taxon>
    </lineage>
</organism>
<sequence length="224" mass="25429">MSKKTIVSMAVIRRLPRYHRYLEELLKNDVKRISSRELSEKMGVTASQIRQDLNNFGGFGQQGYGYNVEELYNNLTKILGLDKTYNTIIIGAGNLGQAIANYTSFEKSGFNLKGIFDINPRLFGLKIRDVEVMDIETVEDFIARNKIDIGILCIPKDNAQYTADRLVRAGIKAIWNFSPIDLKVPDDVILENVHLSDSLFTVSYRLNEEELFKKLKGETAKIDG</sequence>
<dbReference type="EMBL" id="CP000923">
    <property type="protein sequence ID" value="ABY91806.1"/>
    <property type="molecule type" value="Genomic_DNA"/>
</dbReference>
<dbReference type="RefSeq" id="WP_009051727.1">
    <property type="nucleotide sequence ID" value="NC_010320.1"/>
</dbReference>
<dbReference type="SMR" id="B0K3N1"/>
<dbReference type="KEGG" id="tex:Teth514_0496"/>
<dbReference type="HOGENOM" id="CLU_061534_1_0_9"/>
<dbReference type="Proteomes" id="UP000002155">
    <property type="component" value="Chromosome"/>
</dbReference>
<dbReference type="GO" id="GO:0005737">
    <property type="term" value="C:cytoplasm"/>
    <property type="evidence" value="ECO:0007669"/>
    <property type="project" value="UniProtKB-SubCell"/>
</dbReference>
<dbReference type="GO" id="GO:0003677">
    <property type="term" value="F:DNA binding"/>
    <property type="evidence" value="ECO:0007669"/>
    <property type="project" value="UniProtKB-UniRule"/>
</dbReference>
<dbReference type="GO" id="GO:0003700">
    <property type="term" value="F:DNA-binding transcription factor activity"/>
    <property type="evidence" value="ECO:0007669"/>
    <property type="project" value="UniProtKB-UniRule"/>
</dbReference>
<dbReference type="GO" id="GO:0045892">
    <property type="term" value="P:negative regulation of DNA-templated transcription"/>
    <property type="evidence" value="ECO:0007669"/>
    <property type="project" value="InterPro"/>
</dbReference>
<dbReference type="GO" id="GO:0051775">
    <property type="term" value="P:response to redox state"/>
    <property type="evidence" value="ECO:0007669"/>
    <property type="project" value="InterPro"/>
</dbReference>
<dbReference type="Gene3D" id="3.40.50.720">
    <property type="entry name" value="NAD(P)-binding Rossmann-like Domain"/>
    <property type="match status" value="1"/>
</dbReference>
<dbReference type="Gene3D" id="1.10.10.10">
    <property type="entry name" value="Winged helix-like DNA-binding domain superfamily/Winged helix DNA-binding domain"/>
    <property type="match status" value="1"/>
</dbReference>
<dbReference type="HAMAP" id="MF_01131">
    <property type="entry name" value="Rex"/>
    <property type="match status" value="1"/>
</dbReference>
<dbReference type="InterPro" id="IPR003781">
    <property type="entry name" value="CoA-bd"/>
</dbReference>
<dbReference type="InterPro" id="IPR036291">
    <property type="entry name" value="NAD(P)-bd_dom_sf"/>
</dbReference>
<dbReference type="InterPro" id="IPR009718">
    <property type="entry name" value="Rex_DNA-bd_C_dom"/>
</dbReference>
<dbReference type="InterPro" id="IPR022876">
    <property type="entry name" value="Tscrpt_rep_Rex"/>
</dbReference>
<dbReference type="InterPro" id="IPR036388">
    <property type="entry name" value="WH-like_DNA-bd_sf"/>
</dbReference>
<dbReference type="InterPro" id="IPR036390">
    <property type="entry name" value="WH_DNA-bd_sf"/>
</dbReference>
<dbReference type="NCBIfam" id="NF003989">
    <property type="entry name" value="PRK05472.1-3"/>
    <property type="match status" value="1"/>
</dbReference>
<dbReference type="NCBIfam" id="NF003990">
    <property type="entry name" value="PRK05472.1-4"/>
    <property type="match status" value="1"/>
</dbReference>
<dbReference type="NCBIfam" id="NF003993">
    <property type="entry name" value="PRK05472.2-2"/>
    <property type="match status" value="1"/>
</dbReference>
<dbReference type="NCBIfam" id="NF003994">
    <property type="entry name" value="PRK05472.2-3"/>
    <property type="match status" value="1"/>
</dbReference>
<dbReference type="NCBIfam" id="NF003995">
    <property type="entry name" value="PRK05472.2-4"/>
    <property type="match status" value="1"/>
</dbReference>
<dbReference type="NCBIfam" id="NF003996">
    <property type="entry name" value="PRK05472.2-5"/>
    <property type="match status" value="1"/>
</dbReference>
<dbReference type="PANTHER" id="PTHR35786">
    <property type="entry name" value="REDOX-SENSING TRANSCRIPTIONAL REPRESSOR REX"/>
    <property type="match status" value="1"/>
</dbReference>
<dbReference type="PANTHER" id="PTHR35786:SF1">
    <property type="entry name" value="REDOX-SENSING TRANSCRIPTIONAL REPRESSOR REX 1"/>
    <property type="match status" value="1"/>
</dbReference>
<dbReference type="Pfam" id="PF02629">
    <property type="entry name" value="CoA_binding"/>
    <property type="match status" value="1"/>
</dbReference>
<dbReference type="Pfam" id="PF06971">
    <property type="entry name" value="Put_DNA-bind_N"/>
    <property type="match status" value="1"/>
</dbReference>
<dbReference type="SMART" id="SM00881">
    <property type="entry name" value="CoA_binding"/>
    <property type="match status" value="1"/>
</dbReference>
<dbReference type="SUPFAM" id="SSF51735">
    <property type="entry name" value="NAD(P)-binding Rossmann-fold domains"/>
    <property type="match status" value="1"/>
</dbReference>
<dbReference type="SUPFAM" id="SSF46785">
    <property type="entry name" value="Winged helix' DNA-binding domain"/>
    <property type="match status" value="1"/>
</dbReference>
<gene>
    <name evidence="1" type="primary">rex</name>
    <name type="ordered locus">Teth514_0496</name>
</gene>
<reference key="1">
    <citation type="submission" date="2008-01" db="EMBL/GenBank/DDBJ databases">
        <title>Complete sequence of Thermoanaerobacter sp. X514.</title>
        <authorList>
            <consortium name="US DOE Joint Genome Institute"/>
            <person name="Copeland A."/>
            <person name="Lucas S."/>
            <person name="Lapidus A."/>
            <person name="Barry K."/>
            <person name="Glavina del Rio T."/>
            <person name="Dalin E."/>
            <person name="Tice H."/>
            <person name="Pitluck S."/>
            <person name="Bruce D."/>
            <person name="Goodwin L."/>
            <person name="Saunders E."/>
            <person name="Brettin T."/>
            <person name="Detter J.C."/>
            <person name="Han C."/>
            <person name="Schmutz J."/>
            <person name="Larimer F."/>
            <person name="Land M."/>
            <person name="Hauser L."/>
            <person name="Kyrpides N."/>
            <person name="Kim E."/>
            <person name="Hemme C."/>
            <person name="Fields M.W."/>
            <person name="He Z."/>
            <person name="Zhou J."/>
            <person name="Richardson P."/>
        </authorList>
    </citation>
    <scope>NUCLEOTIDE SEQUENCE [LARGE SCALE GENOMIC DNA]</scope>
    <source>
        <strain>X514</strain>
    </source>
</reference>
<accession>B0K3N1</accession>
<feature type="chain" id="PRO_1000137339" description="Redox-sensing transcriptional repressor Rex">
    <location>
        <begin position="1"/>
        <end position="224"/>
    </location>
</feature>
<feature type="DNA-binding region" description="H-T-H motif" evidence="1">
    <location>
        <begin position="17"/>
        <end position="56"/>
    </location>
</feature>
<feature type="binding site" evidence="1">
    <location>
        <begin position="91"/>
        <end position="96"/>
    </location>
    <ligand>
        <name>NAD(+)</name>
        <dbReference type="ChEBI" id="CHEBI:57540"/>
    </ligand>
</feature>
<evidence type="ECO:0000255" key="1">
    <source>
        <dbReference type="HAMAP-Rule" id="MF_01131"/>
    </source>
</evidence>
<proteinExistence type="inferred from homology"/>
<protein>
    <recommendedName>
        <fullName evidence="1">Redox-sensing transcriptional repressor Rex</fullName>
    </recommendedName>
</protein>
<name>REX_THEPX</name>